<reference key="1">
    <citation type="journal article" date="2011" name="J. Bacteriol.">
        <title>Comparative genomics of 28 Salmonella enterica isolates: evidence for CRISPR-mediated adaptive sublineage evolution.</title>
        <authorList>
            <person name="Fricke W.F."/>
            <person name="Mammel M.K."/>
            <person name="McDermott P.F."/>
            <person name="Tartera C."/>
            <person name="White D.G."/>
            <person name="Leclerc J.E."/>
            <person name="Ravel J."/>
            <person name="Cebula T.A."/>
        </authorList>
    </citation>
    <scope>NUCLEOTIDE SEQUENCE [LARGE SCALE GENOMIC DNA]</scope>
    <source>
        <strain>SL254</strain>
    </source>
</reference>
<protein>
    <recommendedName>
        <fullName evidence="1">1-(5-phosphoribosyl)-5-[(5-phosphoribosylamino)methylideneamino] imidazole-4-carboxamide isomerase</fullName>
        <ecNumber evidence="1">5.3.1.16</ecNumber>
    </recommendedName>
    <alternativeName>
        <fullName evidence="1">Phosphoribosylformimino-5-aminoimidazole carboxamide ribotide isomerase</fullName>
    </alternativeName>
</protein>
<comment type="catalytic activity">
    <reaction evidence="1">
        <text>1-(5-phospho-beta-D-ribosyl)-5-[(5-phospho-beta-D-ribosylamino)methylideneamino]imidazole-4-carboxamide = 5-[(5-phospho-1-deoxy-D-ribulos-1-ylimino)methylamino]-1-(5-phospho-beta-D-ribosyl)imidazole-4-carboxamide</text>
        <dbReference type="Rhea" id="RHEA:15469"/>
        <dbReference type="ChEBI" id="CHEBI:58435"/>
        <dbReference type="ChEBI" id="CHEBI:58525"/>
        <dbReference type="EC" id="5.3.1.16"/>
    </reaction>
</comment>
<comment type="pathway">
    <text evidence="1">Amino-acid biosynthesis; L-histidine biosynthesis; L-histidine from 5-phospho-alpha-D-ribose 1-diphosphate: step 4/9.</text>
</comment>
<comment type="subcellular location">
    <subcellularLocation>
        <location evidence="1">Cytoplasm</location>
    </subcellularLocation>
</comment>
<comment type="similarity">
    <text evidence="1">Belongs to the HisA/HisF family.</text>
</comment>
<gene>
    <name evidence="1" type="primary">hisA</name>
    <name type="ordered locus">SNSL254_A2255</name>
</gene>
<sequence>MIIPALDLIDGTVVRLHQGDYARQRDYGNDPLPRLQDYAAQGAGVLHLVDLTGAKDPAKRQIPLIKTLVAGVNVPVQVGGGVRTEEDVAALLKAGVARVVIGSTAVKSPDVVKGWFERFGAQALVLALDVRIDEHGNKQVAVSGWQENSGVSLEQLVETYLPVGLKHVLCTDISRDGTLAGSNVSLYEEVCARYPQIAFQSSGGIGDIDDIAALRGTGVRGVIVGRALLEGKFTVKEAIQCWQNV</sequence>
<keyword id="KW-0028">Amino-acid biosynthesis</keyword>
<keyword id="KW-0963">Cytoplasm</keyword>
<keyword id="KW-0368">Histidine biosynthesis</keyword>
<keyword id="KW-0413">Isomerase</keyword>
<feature type="chain" id="PRO_1000190554" description="1-(5-phosphoribosyl)-5-[(5-phosphoribosylamino)methylideneamino] imidazole-4-carboxamide isomerase">
    <location>
        <begin position="1"/>
        <end position="245"/>
    </location>
</feature>
<feature type="active site" description="Proton acceptor" evidence="1">
    <location>
        <position position="7"/>
    </location>
</feature>
<feature type="active site" description="Proton donor" evidence="1">
    <location>
        <position position="129"/>
    </location>
</feature>
<organism>
    <name type="scientific">Salmonella newport (strain SL254)</name>
    <dbReference type="NCBI Taxonomy" id="423368"/>
    <lineage>
        <taxon>Bacteria</taxon>
        <taxon>Pseudomonadati</taxon>
        <taxon>Pseudomonadota</taxon>
        <taxon>Gammaproteobacteria</taxon>
        <taxon>Enterobacterales</taxon>
        <taxon>Enterobacteriaceae</taxon>
        <taxon>Salmonella</taxon>
    </lineage>
</organism>
<evidence type="ECO:0000255" key="1">
    <source>
        <dbReference type="HAMAP-Rule" id="MF_01014"/>
    </source>
</evidence>
<proteinExistence type="inferred from homology"/>
<dbReference type="EC" id="5.3.1.16" evidence="1"/>
<dbReference type="EMBL" id="CP001113">
    <property type="protein sequence ID" value="ACF63085.1"/>
    <property type="molecule type" value="Genomic_DNA"/>
</dbReference>
<dbReference type="RefSeq" id="WP_000586406.1">
    <property type="nucleotide sequence ID" value="NZ_CCMR01000002.1"/>
</dbReference>
<dbReference type="SMR" id="B4SX45"/>
<dbReference type="KEGG" id="see:SNSL254_A2255"/>
<dbReference type="HOGENOM" id="CLU_048577_1_2_6"/>
<dbReference type="UniPathway" id="UPA00031">
    <property type="reaction ID" value="UER00009"/>
</dbReference>
<dbReference type="Proteomes" id="UP000008824">
    <property type="component" value="Chromosome"/>
</dbReference>
<dbReference type="GO" id="GO:0005737">
    <property type="term" value="C:cytoplasm"/>
    <property type="evidence" value="ECO:0007669"/>
    <property type="project" value="UniProtKB-SubCell"/>
</dbReference>
<dbReference type="GO" id="GO:0003949">
    <property type="term" value="F:1-(5-phosphoribosyl)-5-[(5-phosphoribosylamino)methylideneamino]imidazole-4-carboxamide isomerase activity"/>
    <property type="evidence" value="ECO:0007669"/>
    <property type="project" value="UniProtKB-UniRule"/>
</dbReference>
<dbReference type="GO" id="GO:0000105">
    <property type="term" value="P:L-histidine biosynthetic process"/>
    <property type="evidence" value="ECO:0007669"/>
    <property type="project" value="UniProtKB-UniRule"/>
</dbReference>
<dbReference type="GO" id="GO:0000162">
    <property type="term" value="P:L-tryptophan biosynthetic process"/>
    <property type="evidence" value="ECO:0007669"/>
    <property type="project" value="TreeGrafter"/>
</dbReference>
<dbReference type="CDD" id="cd04732">
    <property type="entry name" value="HisA"/>
    <property type="match status" value="1"/>
</dbReference>
<dbReference type="FunFam" id="3.20.20.70:FF:000009">
    <property type="entry name" value="1-(5-phosphoribosyl)-5-[(5-phosphoribosylamino)methylideneamino] imidazole-4-carboxamide isomerase"/>
    <property type="match status" value="1"/>
</dbReference>
<dbReference type="Gene3D" id="3.20.20.70">
    <property type="entry name" value="Aldolase class I"/>
    <property type="match status" value="1"/>
</dbReference>
<dbReference type="HAMAP" id="MF_01014">
    <property type="entry name" value="HisA"/>
    <property type="match status" value="1"/>
</dbReference>
<dbReference type="InterPro" id="IPR013785">
    <property type="entry name" value="Aldolase_TIM"/>
</dbReference>
<dbReference type="InterPro" id="IPR006062">
    <property type="entry name" value="His_biosynth"/>
</dbReference>
<dbReference type="InterPro" id="IPR006063">
    <property type="entry name" value="HisA_bact_arch"/>
</dbReference>
<dbReference type="InterPro" id="IPR044524">
    <property type="entry name" value="Isoase_HisA-like"/>
</dbReference>
<dbReference type="InterPro" id="IPR023016">
    <property type="entry name" value="Isoase_HisA-like_bact"/>
</dbReference>
<dbReference type="InterPro" id="IPR011060">
    <property type="entry name" value="RibuloseP-bd_barrel"/>
</dbReference>
<dbReference type="NCBIfam" id="TIGR00007">
    <property type="entry name" value="1-(5-phosphoribosyl)-5-[(5-phosphoribosylamino)methylideneamino]imidazole-4-carboxamide isomerase"/>
    <property type="match status" value="1"/>
</dbReference>
<dbReference type="PANTHER" id="PTHR43090">
    <property type="entry name" value="1-(5-PHOSPHORIBOSYL)-5-[(5-PHOSPHORIBOSYLAMINO)METHYLIDENEAMINO] IMIDAZOLE-4-CARBOXAMIDE ISOMERASE"/>
    <property type="match status" value="1"/>
</dbReference>
<dbReference type="PANTHER" id="PTHR43090:SF2">
    <property type="entry name" value="1-(5-PHOSPHORIBOSYL)-5-[(5-PHOSPHORIBOSYLAMINO)METHYLIDENEAMINO] IMIDAZOLE-4-CARBOXAMIDE ISOMERASE"/>
    <property type="match status" value="1"/>
</dbReference>
<dbReference type="Pfam" id="PF00977">
    <property type="entry name" value="His_biosynth"/>
    <property type="match status" value="1"/>
</dbReference>
<dbReference type="SUPFAM" id="SSF51366">
    <property type="entry name" value="Ribulose-phoshate binding barrel"/>
    <property type="match status" value="1"/>
</dbReference>
<name>HIS4_SALNS</name>
<accession>B4SX45</accession>